<gene>
    <name type="primary">ymjA</name>
    <name type="ordered locus">b1295</name>
    <name type="ordered locus">JW1288</name>
</gene>
<sequence length="81" mass="9321">MNHDIPLKYFDIADEYATECAEPVAEAERTPLAHYFQLLLTRLMNNEEISEEAQHEMAAEAGINPVRIDEIAEFLNQWGNE</sequence>
<organism>
    <name type="scientific">Escherichia coli (strain K12)</name>
    <dbReference type="NCBI Taxonomy" id="83333"/>
    <lineage>
        <taxon>Bacteria</taxon>
        <taxon>Pseudomonadati</taxon>
        <taxon>Pseudomonadota</taxon>
        <taxon>Gammaproteobacteria</taxon>
        <taxon>Enterobacterales</taxon>
        <taxon>Enterobacteriaceae</taxon>
        <taxon>Escherichia</taxon>
    </lineage>
</organism>
<feature type="chain" id="PRO_0000168899" description="Uncharacterized protein YmjA">
    <location>
        <begin position="1"/>
        <end position="81"/>
    </location>
</feature>
<keyword id="KW-1185">Reference proteome</keyword>
<name>YMJA_ECOLI</name>
<dbReference type="EMBL" id="U00096">
    <property type="protein sequence ID" value="AAC74377.1"/>
    <property type="molecule type" value="Genomic_DNA"/>
</dbReference>
<dbReference type="EMBL" id="AP009048">
    <property type="protein sequence ID" value="BAE76397.1"/>
    <property type="molecule type" value="Genomic_DNA"/>
</dbReference>
<dbReference type="PIR" id="B64878">
    <property type="entry name" value="B64878"/>
</dbReference>
<dbReference type="RefSeq" id="NP_415811.1">
    <property type="nucleotide sequence ID" value="NC_000913.3"/>
</dbReference>
<dbReference type="RefSeq" id="WP_001015110.1">
    <property type="nucleotide sequence ID" value="NZ_STEB01000005.1"/>
</dbReference>
<dbReference type="SMR" id="P0ACV8"/>
<dbReference type="BioGRID" id="4263365">
    <property type="interactions" value="29"/>
</dbReference>
<dbReference type="FunCoup" id="P0ACV8">
    <property type="interactions" value="32"/>
</dbReference>
<dbReference type="IntAct" id="P0ACV8">
    <property type="interactions" value="12"/>
</dbReference>
<dbReference type="STRING" id="511145.b1295"/>
<dbReference type="jPOST" id="P0ACV8"/>
<dbReference type="PaxDb" id="511145-b1295"/>
<dbReference type="EnsemblBacteria" id="AAC74377">
    <property type="protein sequence ID" value="AAC74377"/>
    <property type="gene ID" value="b1295"/>
</dbReference>
<dbReference type="GeneID" id="945874"/>
<dbReference type="KEGG" id="ecj:JW1288"/>
<dbReference type="KEGG" id="eco:b1295"/>
<dbReference type="KEGG" id="ecoc:C3026_07605"/>
<dbReference type="PATRIC" id="fig|511145.12.peg.1350"/>
<dbReference type="EchoBASE" id="EB4043"/>
<dbReference type="eggNOG" id="ENOG5032SN7">
    <property type="taxonomic scope" value="Bacteria"/>
</dbReference>
<dbReference type="HOGENOM" id="CLU_2568610_0_0_6"/>
<dbReference type="InParanoid" id="P0ACV8"/>
<dbReference type="OMA" id="AQHEMAS"/>
<dbReference type="OrthoDB" id="6564072at2"/>
<dbReference type="BioCyc" id="EcoCyc:G6642-MONOMER"/>
<dbReference type="PRO" id="PR:P0ACV8"/>
<dbReference type="Proteomes" id="UP000000625">
    <property type="component" value="Chromosome"/>
</dbReference>
<dbReference type="GO" id="GO:0005829">
    <property type="term" value="C:cytosol"/>
    <property type="evidence" value="ECO:0000314"/>
    <property type="project" value="EcoCyc"/>
</dbReference>
<dbReference type="InterPro" id="IPR020251">
    <property type="entry name" value="Uncharacterised_YmjA"/>
</dbReference>
<dbReference type="Pfam" id="PF10820">
    <property type="entry name" value="DUF2543"/>
    <property type="match status" value="1"/>
</dbReference>
<proteinExistence type="predicted"/>
<accession>P0ACV8</accession>
<accession>P76036</accession>
<accession>Q2MBF9</accession>
<protein>
    <recommendedName>
        <fullName>Uncharacterized protein YmjA</fullName>
    </recommendedName>
</protein>
<reference key="1">
    <citation type="journal article" date="1997" name="Science">
        <title>The complete genome sequence of Escherichia coli K-12.</title>
        <authorList>
            <person name="Blattner F.R."/>
            <person name="Plunkett G. III"/>
            <person name="Bloch C.A."/>
            <person name="Perna N.T."/>
            <person name="Burland V."/>
            <person name="Riley M."/>
            <person name="Collado-Vides J."/>
            <person name="Glasner J.D."/>
            <person name="Rode C.K."/>
            <person name="Mayhew G.F."/>
            <person name="Gregor J."/>
            <person name="Davis N.W."/>
            <person name="Kirkpatrick H.A."/>
            <person name="Goeden M.A."/>
            <person name="Rose D.J."/>
            <person name="Mau B."/>
            <person name="Shao Y."/>
        </authorList>
    </citation>
    <scope>NUCLEOTIDE SEQUENCE [LARGE SCALE GENOMIC DNA]</scope>
    <source>
        <strain>K12 / MG1655 / ATCC 47076</strain>
    </source>
</reference>
<reference key="2">
    <citation type="journal article" date="2006" name="Mol. Syst. Biol.">
        <title>Highly accurate genome sequences of Escherichia coli K-12 strains MG1655 and W3110.</title>
        <authorList>
            <person name="Hayashi K."/>
            <person name="Morooka N."/>
            <person name="Yamamoto Y."/>
            <person name="Fujita K."/>
            <person name="Isono K."/>
            <person name="Choi S."/>
            <person name="Ohtsubo E."/>
            <person name="Baba T."/>
            <person name="Wanner B.L."/>
            <person name="Mori H."/>
            <person name="Horiuchi T."/>
        </authorList>
    </citation>
    <scope>NUCLEOTIDE SEQUENCE [LARGE SCALE GENOMIC DNA]</scope>
    <source>
        <strain>K12 / W3110 / ATCC 27325 / DSM 5911</strain>
    </source>
</reference>